<gene>
    <name evidence="1" type="primary">ndk</name>
    <name type="ordered locus">MAB_1606</name>
</gene>
<organism>
    <name type="scientific">Mycobacteroides abscessus (strain ATCC 19977 / DSM 44196 / CCUG 20993 / CIP 104536 / JCM 13569 / NCTC 13031 / TMC 1543 / L948)</name>
    <name type="common">Mycobacterium abscessus</name>
    <dbReference type="NCBI Taxonomy" id="561007"/>
    <lineage>
        <taxon>Bacteria</taxon>
        <taxon>Bacillati</taxon>
        <taxon>Actinomycetota</taxon>
        <taxon>Actinomycetes</taxon>
        <taxon>Mycobacteriales</taxon>
        <taxon>Mycobacteriaceae</taxon>
        <taxon>Mycobacteroides</taxon>
        <taxon>Mycobacteroides abscessus</taxon>
    </lineage>
</organism>
<reference key="1">
    <citation type="journal article" date="2009" name="PLoS ONE">
        <title>Non mycobacterial virulence genes in the genome of the emerging pathogen Mycobacterium abscessus.</title>
        <authorList>
            <person name="Ripoll F."/>
            <person name="Pasek S."/>
            <person name="Schenowitz C."/>
            <person name="Dossat C."/>
            <person name="Barbe V."/>
            <person name="Rottman M."/>
            <person name="Macheras E."/>
            <person name="Heym B."/>
            <person name="Herrmann J.L."/>
            <person name="Daffe M."/>
            <person name="Brosch R."/>
            <person name="Risler J.L."/>
            <person name="Gaillard J.L."/>
        </authorList>
    </citation>
    <scope>NUCLEOTIDE SEQUENCE [LARGE SCALE GENOMIC DNA]</scope>
    <source>
        <strain>ATCC 19977 / DSM 44196 / CCUG 20993 / CIP 104536 / JCM 13569 / NCTC 13031 / TMC 1543 / L948</strain>
    </source>
</reference>
<keyword id="KW-0067">ATP-binding</keyword>
<keyword id="KW-0963">Cytoplasm</keyword>
<keyword id="KW-0418">Kinase</keyword>
<keyword id="KW-0460">Magnesium</keyword>
<keyword id="KW-0479">Metal-binding</keyword>
<keyword id="KW-0546">Nucleotide metabolism</keyword>
<keyword id="KW-0547">Nucleotide-binding</keyword>
<keyword id="KW-0597">Phosphoprotein</keyword>
<keyword id="KW-1185">Reference proteome</keyword>
<keyword id="KW-0808">Transferase</keyword>
<accession>B1MMX9</accession>
<dbReference type="EC" id="2.7.4.6" evidence="1"/>
<dbReference type="EMBL" id="CU458896">
    <property type="protein sequence ID" value="CAM61691.1"/>
    <property type="molecule type" value="Genomic_DNA"/>
</dbReference>
<dbReference type="RefSeq" id="WP_005060204.1">
    <property type="nucleotide sequence ID" value="NZ_MLCG01000002.1"/>
</dbReference>
<dbReference type="SMR" id="B1MMX9"/>
<dbReference type="GeneID" id="93378558"/>
<dbReference type="KEGG" id="mab:MAB_1606"/>
<dbReference type="Proteomes" id="UP000007137">
    <property type="component" value="Chromosome"/>
</dbReference>
<dbReference type="GO" id="GO:0005737">
    <property type="term" value="C:cytoplasm"/>
    <property type="evidence" value="ECO:0007669"/>
    <property type="project" value="UniProtKB-SubCell"/>
</dbReference>
<dbReference type="GO" id="GO:0005524">
    <property type="term" value="F:ATP binding"/>
    <property type="evidence" value="ECO:0007669"/>
    <property type="project" value="UniProtKB-UniRule"/>
</dbReference>
<dbReference type="GO" id="GO:0046872">
    <property type="term" value="F:metal ion binding"/>
    <property type="evidence" value="ECO:0007669"/>
    <property type="project" value="UniProtKB-KW"/>
</dbReference>
<dbReference type="GO" id="GO:0004550">
    <property type="term" value="F:nucleoside diphosphate kinase activity"/>
    <property type="evidence" value="ECO:0007669"/>
    <property type="project" value="UniProtKB-UniRule"/>
</dbReference>
<dbReference type="GO" id="GO:0006241">
    <property type="term" value="P:CTP biosynthetic process"/>
    <property type="evidence" value="ECO:0007669"/>
    <property type="project" value="UniProtKB-UniRule"/>
</dbReference>
<dbReference type="GO" id="GO:0006183">
    <property type="term" value="P:GTP biosynthetic process"/>
    <property type="evidence" value="ECO:0007669"/>
    <property type="project" value="UniProtKB-UniRule"/>
</dbReference>
<dbReference type="GO" id="GO:0006228">
    <property type="term" value="P:UTP biosynthetic process"/>
    <property type="evidence" value="ECO:0007669"/>
    <property type="project" value="UniProtKB-UniRule"/>
</dbReference>
<dbReference type="CDD" id="cd04413">
    <property type="entry name" value="NDPk_I"/>
    <property type="match status" value="1"/>
</dbReference>
<dbReference type="FunFam" id="3.30.70.141:FF:000003">
    <property type="entry name" value="Nucleoside diphosphate kinase"/>
    <property type="match status" value="1"/>
</dbReference>
<dbReference type="Gene3D" id="3.30.70.141">
    <property type="entry name" value="Nucleoside diphosphate kinase-like domain"/>
    <property type="match status" value="1"/>
</dbReference>
<dbReference type="HAMAP" id="MF_00451">
    <property type="entry name" value="NDP_kinase"/>
    <property type="match status" value="1"/>
</dbReference>
<dbReference type="InterPro" id="IPR034907">
    <property type="entry name" value="NDK-like_dom"/>
</dbReference>
<dbReference type="InterPro" id="IPR036850">
    <property type="entry name" value="NDK-like_dom_sf"/>
</dbReference>
<dbReference type="InterPro" id="IPR001564">
    <property type="entry name" value="Nucleoside_diP_kinase"/>
</dbReference>
<dbReference type="InterPro" id="IPR023005">
    <property type="entry name" value="Nucleoside_diP_kinase_AS"/>
</dbReference>
<dbReference type="NCBIfam" id="NF001908">
    <property type="entry name" value="PRK00668.1"/>
    <property type="match status" value="1"/>
</dbReference>
<dbReference type="PANTHER" id="PTHR11349">
    <property type="entry name" value="NUCLEOSIDE DIPHOSPHATE KINASE"/>
    <property type="match status" value="1"/>
</dbReference>
<dbReference type="Pfam" id="PF00334">
    <property type="entry name" value="NDK"/>
    <property type="match status" value="1"/>
</dbReference>
<dbReference type="PRINTS" id="PR01243">
    <property type="entry name" value="NUCDPKINASE"/>
</dbReference>
<dbReference type="SMART" id="SM00562">
    <property type="entry name" value="NDK"/>
    <property type="match status" value="1"/>
</dbReference>
<dbReference type="SUPFAM" id="SSF54919">
    <property type="entry name" value="Nucleoside diphosphate kinase, NDK"/>
    <property type="match status" value="1"/>
</dbReference>
<dbReference type="PROSITE" id="PS00469">
    <property type="entry name" value="NDPK"/>
    <property type="match status" value="1"/>
</dbReference>
<dbReference type="PROSITE" id="PS51374">
    <property type="entry name" value="NDPK_LIKE"/>
    <property type="match status" value="1"/>
</dbReference>
<sequence length="136" mass="14576">MTERTLVLIKPDGVRRGLVGEVLNRIERKGLTLAALELKNVDDATARAHYAEHAEKPFFGSLLEFITSGPLVAAVLEGPRAIAAFRQIAGGTDPVEKAATGSIRGDFALETQENLVHGSDSPESAAREIALWFPAL</sequence>
<protein>
    <recommendedName>
        <fullName evidence="1">Nucleoside diphosphate kinase</fullName>
        <shortName evidence="1">NDK</shortName>
        <shortName evidence="1">NDP kinase</shortName>
        <ecNumber evidence="1">2.7.4.6</ecNumber>
    </recommendedName>
    <alternativeName>
        <fullName evidence="1">Nucleoside-2-P kinase</fullName>
    </alternativeName>
</protein>
<evidence type="ECO:0000255" key="1">
    <source>
        <dbReference type="HAMAP-Rule" id="MF_00451"/>
    </source>
</evidence>
<feature type="chain" id="PRO_1000192274" description="Nucleoside diphosphate kinase">
    <location>
        <begin position="1"/>
        <end position="136"/>
    </location>
</feature>
<feature type="active site" description="Pros-phosphohistidine intermediate" evidence="1">
    <location>
        <position position="117"/>
    </location>
</feature>
<feature type="binding site" evidence="1">
    <location>
        <position position="10"/>
    </location>
    <ligand>
        <name>ATP</name>
        <dbReference type="ChEBI" id="CHEBI:30616"/>
    </ligand>
</feature>
<feature type="binding site" evidence="1">
    <location>
        <position position="58"/>
    </location>
    <ligand>
        <name>ATP</name>
        <dbReference type="ChEBI" id="CHEBI:30616"/>
    </ligand>
</feature>
<feature type="binding site" evidence="1">
    <location>
        <position position="86"/>
    </location>
    <ligand>
        <name>ATP</name>
        <dbReference type="ChEBI" id="CHEBI:30616"/>
    </ligand>
</feature>
<feature type="binding site" evidence="1">
    <location>
        <position position="92"/>
    </location>
    <ligand>
        <name>ATP</name>
        <dbReference type="ChEBI" id="CHEBI:30616"/>
    </ligand>
</feature>
<feature type="binding site" evidence="1">
    <location>
        <position position="104"/>
    </location>
    <ligand>
        <name>ATP</name>
        <dbReference type="ChEBI" id="CHEBI:30616"/>
    </ligand>
</feature>
<feature type="binding site" evidence="1">
    <location>
        <position position="114"/>
    </location>
    <ligand>
        <name>ATP</name>
        <dbReference type="ChEBI" id="CHEBI:30616"/>
    </ligand>
</feature>
<name>NDK_MYCA9</name>
<comment type="function">
    <text evidence="1">Major role in the synthesis of nucleoside triphosphates other than ATP. The ATP gamma phosphate is transferred to the NDP beta phosphate via a ping-pong mechanism, using a phosphorylated active-site intermediate.</text>
</comment>
<comment type="catalytic activity">
    <reaction evidence="1">
        <text>a 2'-deoxyribonucleoside 5'-diphosphate + ATP = a 2'-deoxyribonucleoside 5'-triphosphate + ADP</text>
        <dbReference type="Rhea" id="RHEA:44640"/>
        <dbReference type="ChEBI" id="CHEBI:30616"/>
        <dbReference type="ChEBI" id="CHEBI:61560"/>
        <dbReference type="ChEBI" id="CHEBI:73316"/>
        <dbReference type="ChEBI" id="CHEBI:456216"/>
        <dbReference type="EC" id="2.7.4.6"/>
    </reaction>
</comment>
<comment type="catalytic activity">
    <reaction evidence="1">
        <text>a ribonucleoside 5'-diphosphate + ATP = a ribonucleoside 5'-triphosphate + ADP</text>
        <dbReference type="Rhea" id="RHEA:18113"/>
        <dbReference type="ChEBI" id="CHEBI:30616"/>
        <dbReference type="ChEBI" id="CHEBI:57930"/>
        <dbReference type="ChEBI" id="CHEBI:61557"/>
        <dbReference type="ChEBI" id="CHEBI:456216"/>
        <dbReference type="EC" id="2.7.4.6"/>
    </reaction>
</comment>
<comment type="cofactor">
    <cofactor evidence="1">
        <name>Mg(2+)</name>
        <dbReference type="ChEBI" id="CHEBI:18420"/>
    </cofactor>
</comment>
<comment type="subunit">
    <text evidence="1">Homotetramer.</text>
</comment>
<comment type="subcellular location">
    <subcellularLocation>
        <location evidence="1">Cytoplasm</location>
    </subcellularLocation>
</comment>
<comment type="similarity">
    <text evidence="1">Belongs to the NDK family.</text>
</comment>
<proteinExistence type="inferred from homology"/>